<sequence>MPVPIVIETSGRSERAYDIYSRLLKDRIILLGTPIDDQVASLICAQLLFLESENPEKEIYLYINSPGGSVTAGMAIYDTMQYITSPVATLCLGQAASMGALLLAAGAPGMRHALPNSRIMIHQPSGGFHGQASDIDIHAREVLRMKANLNEIMARHTGQPVERVADDTERDYFMGPAEAKEYGIIDSILTSRRDATQNQAK</sequence>
<organism>
    <name type="scientific">Nitratidesulfovibrio vulgaris (strain DSM 19637 / Miyazaki F)</name>
    <name type="common">Desulfovibrio vulgaris</name>
    <dbReference type="NCBI Taxonomy" id="883"/>
    <lineage>
        <taxon>Bacteria</taxon>
        <taxon>Pseudomonadati</taxon>
        <taxon>Thermodesulfobacteriota</taxon>
        <taxon>Desulfovibrionia</taxon>
        <taxon>Desulfovibrionales</taxon>
        <taxon>Desulfovibrionaceae</taxon>
        <taxon>Nitratidesulfovibrio</taxon>
    </lineage>
</organism>
<protein>
    <recommendedName>
        <fullName evidence="1">ATP-dependent Clp protease proteolytic subunit</fullName>
        <ecNumber evidence="1">3.4.21.92</ecNumber>
    </recommendedName>
    <alternativeName>
        <fullName evidence="1">Endopeptidase Clp</fullName>
    </alternativeName>
</protein>
<feature type="chain" id="PRO_1000189642" description="ATP-dependent Clp protease proteolytic subunit">
    <location>
        <begin position="1"/>
        <end position="201"/>
    </location>
</feature>
<feature type="active site" description="Nucleophile" evidence="1">
    <location>
        <position position="97"/>
    </location>
</feature>
<feature type="active site" evidence="1">
    <location>
        <position position="122"/>
    </location>
</feature>
<name>CLPP_NITV9</name>
<comment type="function">
    <text evidence="1">Cleaves peptides in various proteins in a process that requires ATP hydrolysis. Has a chymotrypsin-like activity. Plays a major role in the degradation of misfolded proteins.</text>
</comment>
<comment type="catalytic activity">
    <reaction evidence="1">
        <text>Hydrolysis of proteins to small peptides in the presence of ATP and magnesium. alpha-casein is the usual test substrate. In the absence of ATP, only oligopeptides shorter than five residues are hydrolyzed (such as succinyl-Leu-Tyr-|-NHMec, and Leu-Tyr-Leu-|-Tyr-Trp, in which cleavage of the -Tyr-|-Leu- and -Tyr-|-Trp bonds also occurs).</text>
        <dbReference type="EC" id="3.4.21.92"/>
    </reaction>
</comment>
<comment type="subunit">
    <text evidence="1">Fourteen ClpP subunits assemble into 2 heptameric rings which stack back to back to give a disk-like structure with a central cavity, resembling the structure of eukaryotic proteasomes.</text>
</comment>
<comment type="subcellular location">
    <subcellularLocation>
        <location evidence="1">Cytoplasm</location>
    </subcellularLocation>
</comment>
<comment type="similarity">
    <text evidence="1">Belongs to the peptidase S14 family.</text>
</comment>
<reference key="1">
    <citation type="submission" date="2008-10" db="EMBL/GenBank/DDBJ databases">
        <title>Complete sequence of Desulfovibrio vulgaris str. 'Miyazaki F'.</title>
        <authorList>
            <person name="Lucas S."/>
            <person name="Copeland A."/>
            <person name="Lapidus A."/>
            <person name="Glavina del Rio T."/>
            <person name="Dalin E."/>
            <person name="Tice H."/>
            <person name="Bruce D."/>
            <person name="Goodwin L."/>
            <person name="Pitluck S."/>
            <person name="Sims D."/>
            <person name="Brettin T."/>
            <person name="Detter J.C."/>
            <person name="Han C."/>
            <person name="Larimer F."/>
            <person name="Land M."/>
            <person name="Hauser L."/>
            <person name="Kyrpides N."/>
            <person name="Mikhailova N."/>
            <person name="Hazen T.C."/>
            <person name="Richardson P."/>
        </authorList>
    </citation>
    <scope>NUCLEOTIDE SEQUENCE [LARGE SCALE GENOMIC DNA]</scope>
    <source>
        <strain>DSM 19637 / Miyazaki F</strain>
    </source>
</reference>
<accession>B8DNL4</accession>
<keyword id="KW-0963">Cytoplasm</keyword>
<keyword id="KW-0378">Hydrolase</keyword>
<keyword id="KW-0645">Protease</keyword>
<keyword id="KW-0720">Serine protease</keyword>
<evidence type="ECO:0000255" key="1">
    <source>
        <dbReference type="HAMAP-Rule" id="MF_00444"/>
    </source>
</evidence>
<gene>
    <name evidence="1" type="primary">clpP</name>
    <name type="ordered locus">DvMF_0110</name>
</gene>
<proteinExistence type="inferred from homology"/>
<dbReference type="EC" id="3.4.21.92" evidence="1"/>
<dbReference type="EMBL" id="CP001197">
    <property type="protein sequence ID" value="ACL07071.1"/>
    <property type="molecule type" value="Genomic_DNA"/>
</dbReference>
<dbReference type="SMR" id="B8DNL4"/>
<dbReference type="STRING" id="883.DvMF_0110"/>
<dbReference type="MEROPS" id="S14.001"/>
<dbReference type="KEGG" id="dvm:DvMF_0110"/>
<dbReference type="eggNOG" id="COG0740">
    <property type="taxonomic scope" value="Bacteria"/>
</dbReference>
<dbReference type="HOGENOM" id="CLU_058707_3_3_7"/>
<dbReference type="OrthoDB" id="9802800at2"/>
<dbReference type="GO" id="GO:0005737">
    <property type="term" value="C:cytoplasm"/>
    <property type="evidence" value="ECO:0007669"/>
    <property type="project" value="UniProtKB-SubCell"/>
</dbReference>
<dbReference type="GO" id="GO:0009368">
    <property type="term" value="C:endopeptidase Clp complex"/>
    <property type="evidence" value="ECO:0007669"/>
    <property type="project" value="TreeGrafter"/>
</dbReference>
<dbReference type="GO" id="GO:0004176">
    <property type="term" value="F:ATP-dependent peptidase activity"/>
    <property type="evidence" value="ECO:0007669"/>
    <property type="project" value="InterPro"/>
</dbReference>
<dbReference type="GO" id="GO:0051117">
    <property type="term" value="F:ATPase binding"/>
    <property type="evidence" value="ECO:0007669"/>
    <property type="project" value="TreeGrafter"/>
</dbReference>
<dbReference type="GO" id="GO:0004252">
    <property type="term" value="F:serine-type endopeptidase activity"/>
    <property type="evidence" value="ECO:0007669"/>
    <property type="project" value="UniProtKB-UniRule"/>
</dbReference>
<dbReference type="GO" id="GO:0006515">
    <property type="term" value="P:protein quality control for misfolded or incompletely synthesized proteins"/>
    <property type="evidence" value="ECO:0007669"/>
    <property type="project" value="TreeGrafter"/>
</dbReference>
<dbReference type="CDD" id="cd07017">
    <property type="entry name" value="S14_ClpP_2"/>
    <property type="match status" value="1"/>
</dbReference>
<dbReference type="FunFam" id="3.90.226.10:FF:000001">
    <property type="entry name" value="ATP-dependent Clp protease proteolytic subunit"/>
    <property type="match status" value="1"/>
</dbReference>
<dbReference type="Gene3D" id="3.90.226.10">
    <property type="entry name" value="2-enoyl-CoA Hydratase, Chain A, domain 1"/>
    <property type="match status" value="1"/>
</dbReference>
<dbReference type="HAMAP" id="MF_00444">
    <property type="entry name" value="ClpP"/>
    <property type="match status" value="1"/>
</dbReference>
<dbReference type="InterPro" id="IPR001907">
    <property type="entry name" value="ClpP"/>
</dbReference>
<dbReference type="InterPro" id="IPR029045">
    <property type="entry name" value="ClpP/crotonase-like_dom_sf"/>
</dbReference>
<dbReference type="InterPro" id="IPR023562">
    <property type="entry name" value="ClpP/TepA"/>
</dbReference>
<dbReference type="InterPro" id="IPR033135">
    <property type="entry name" value="ClpP_His_AS"/>
</dbReference>
<dbReference type="InterPro" id="IPR018215">
    <property type="entry name" value="ClpP_Ser_AS"/>
</dbReference>
<dbReference type="NCBIfam" id="TIGR00493">
    <property type="entry name" value="clpP"/>
    <property type="match status" value="1"/>
</dbReference>
<dbReference type="NCBIfam" id="NF001368">
    <property type="entry name" value="PRK00277.1"/>
    <property type="match status" value="1"/>
</dbReference>
<dbReference type="NCBIfam" id="NF009205">
    <property type="entry name" value="PRK12553.1"/>
    <property type="match status" value="1"/>
</dbReference>
<dbReference type="PANTHER" id="PTHR10381">
    <property type="entry name" value="ATP-DEPENDENT CLP PROTEASE PROTEOLYTIC SUBUNIT"/>
    <property type="match status" value="1"/>
</dbReference>
<dbReference type="PANTHER" id="PTHR10381:SF11">
    <property type="entry name" value="ATP-DEPENDENT CLP PROTEASE PROTEOLYTIC SUBUNIT, MITOCHONDRIAL"/>
    <property type="match status" value="1"/>
</dbReference>
<dbReference type="Pfam" id="PF00574">
    <property type="entry name" value="CLP_protease"/>
    <property type="match status" value="1"/>
</dbReference>
<dbReference type="PRINTS" id="PR00127">
    <property type="entry name" value="CLPPROTEASEP"/>
</dbReference>
<dbReference type="SUPFAM" id="SSF52096">
    <property type="entry name" value="ClpP/crotonase"/>
    <property type="match status" value="1"/>
</dbReference>
<dbReference type="PROSITE" id="PS00382">
    <property type="entry name" value="CLP_PROTEASE_HIS"/>
    <property type="match status" value="1"/>
</dbReference>
<dbReference type="PROSITE" id="PS00381">
    <property type="entry name" value="CLP_PROTEASE_SER"/>
    <property type="match status" value="1"/>
</dbReference>